<comment type="function">
    <text evidence="1 3 6 7 8 9">Cytokine that plays a critical role in modulating tissue responses during inflammation (PubMed:17204547). Plays an essential role in the regeneration of epithelial cells to maintain barrier function after injury and for the prevention of further tissue damage (PubMed:17204547). Unlike most of the cytokines, has no effect on immune cells. Signals through a heterodimeric receptor composed of two subunits, the specific receptor IL22RA1 which is present on non-immune cells in many organs and the shared subunit IL10RB (PubMed:10875937, PubMed:18599299). Ligation of IL22RA1 with IL22 induces activation of the tyrosine kinases JAK1 and TYK2, which in turn activates STAT3. In turn, promotes cell survival and proliferation through STAT3, ERK1/2 and PI3K/AKT pathways (PubMed:25793261, PubMed:31311100). Promotes phosphorylation of GSK3B at 'Ser-9' and CTTN (By similarity). Promotes epithelial cell spreading (By similarity).</text>
</comment>
<comment type="interaction">
    <interactant intactId="EBI-8040250">
        <id>Q9GZX6</id>
    </interactant>
    <interactant intactId="EBI-11175900">
        <id>Q08334</id>
        <label>IL10RB</label>
    </interactant>
    <organismsDiffer>false</organismsDiffer>
    <experiments>2</experiments>
</comment>
<comment type="interaction">
    <interactant intactId="EBI-8040250">
        <id>Q9GZX6</id>
    </interactant>
    <interactant intactId="EBI-3940749">
        <id>Q8N6P7</id>
        <label>IL22RA1</label>
    </interactant>
    <organismsDiffer>false</organismsDiffer>
    <experiments>9</experiments>
</comment>
<comment type="interaction">
    <interactant intactId="EBI-11315863">
        <id>PRO_0000015383</id>
    </interactant>
    <interactant intactId="EBI-3940749">
        <id>Q8N6P7</id>
        <label>IL22RA1</label>
    </interactant>
    <organismsDiffer>false</organismsDiffer>
    <experiments>4</experiments>
</comment>
<comment type="subcellular location">
    <subcellularLocation>
        <location>Secreted</location>
    </subcellularLocation>
</comment>
<comment type="similarity">
    <text evidence="11">Belongs to the IL-10 family.</text>
</comment>
<comment type="online information" name="Atlas of Genetics and Cytogenetics in Oncology and Haematology">
    <link uri="https://atlasgeneticsoncology.org/gene/44519/IL22"/>
</comment>
<dbReference type="EMBL" id="AJ277247">
    <property type="protein sequence ID" value="CAC06085.1"/>
    <property type="molecule type" value="mRNA"/>
</dbReference>
<dbReference type="EMBL" id="AJ277248">
    <property type="protein sequence ID" value="CAC19409.1"/>
    <property type="molecule type" value="Genomic_DNA"/>
</dbReference>
<dbReference type="EMBL" id="AF279437">
    <property type="protein sequence ID" value="AAG22064.1"/>
    <property type="molecule type" value="mRNA"/>
</dbReference>
<dbReference type="EMBL" id="AY358890">
    <property type="protein sequence ID" value="AAQ89249.1"/>
    <property type="molecule type" value="mRNA"/>
</dbReference>
<dbReference type="EMBL" id="AF387519">
    <property type="protein sequence ID" value="AAK62468.1"/>
    <property type="molecule type" value="Genomic_DNA"/>
</dbReference>
<dbReference type="EMBL" id="BC066263">
    <property type="protein sequence ID" value="AAH66263.1"/>
    <property type="molecule type" value="mRNA"/>
</dbReference>
<dbReference type="EMBL" id="BC067510">
    <property type="protein sequence ID" value="AAH67510.1"/>
    <property type="molecule type" value="mRNA"/>
</dbReference>
<dbReference type="EMBL" id="BC069112">
    <property type="protein sequence ID" value="AAH69112.1"/>
    <property type="molecule type" value="mRNA"/>
</dbReference>
<dbReference type="EMBL" id="BC069308">
    <property type="protein sequence ID" value="AAH69308.1"/>
    <property type="molecule type" value="mRNA"/>
</dbReference>
<dbReference type="EMBL" id="BC070261">
    <property type="protein sequence ID" value="AAH70261.1"/>
    <property type="molecule type" value="mRNA"/>
</dbReference>
<dbReference type="CCDS" id="CCDS8982.1"/>
<dbReference type="RefSeq" id="NP_065386.1">
    <property type="nucleotide sequence ID" value="NM_020525.5"/>
</dbReference>
<dbReference type="PDB" id="1M4R">
    <property type="method" value="X-ray"/>
    <property type="resolution" value="2.00 A"/>
    <property type="chains" value="A/B=29-179"/>
</dbReference>
<dbReference type="PDB" id="1YKB">
    <property type="method" value="X-ray"/>
    <property type="resolution" value="2.60 A"/>
    <property type="chains" value="A/B/C/D/E/F=38-179"/>
</dbReference>
<dbReference type="PDB" id="3DGC">
    <property type="method" value="X-ray"/>
    <property type="resolution" value="2.50 A"/>
    <property type="chains" value="L/M=39-179"/>
</dbReference>
<dbReference type="PDB" id="3DLQ">
    <property type="method" value="X-ray"/>
    <property type="resolution" value="1.90 A"/>
    <property type="chains" value="I=29-179"/>
</dbReference>
<dbReference type="PDB" id="3G9V">
    <property type="method" value="X-ray"/>
    <property type="resolution" value="2.76 A"/>
    <property type="chains" value="B/D=29-179"/>
</dbReference>
<dbReference type="PDB" id="3Q1S">
    <property type="method" value="X-ray"/>
    <property type="resolution" value="2.15 A"/>
    <property type="chains" value="I=29-179"/>
</dbReference>
<dbReference type="PDBsum" id="1M4R"/>
<dbReference type="PDBsum" id="1YKB"/>
<dbReference type="PDBsum" id="3DGC"/>
<dbReference type="PDBsum" id="3DLQ"/>
<dbReference type="PDBsum" id="3G9V"/>
<dbReference type="PDBsum" id="3Q1S"/>
<dbReference type="SMR" id="Q9GZX6"/>
<dbReference type="BioGRID" id="119096">
    <property type="interactions" value="8"/>
</dbReference>
<dbReference type="ComplexPortal" id="CPX-10306">
    <property type="entry name" value="Interleukin-22 receptor-ligand complex"/>
</dbReference>
<dbReference type="ComplexPortal" id="CPX-10309">
    <property type="entry name" value="Interleukin-22 decoy receptor complex"/>
</dbReference>
<dbReference type="CORUM" id="Q9GZX6"/>
<dbReference type="DIP" id="DIP-46035N"/>
<dbReference type="FunCoup" id="Q9GZX6">
    <property type="interactions" value="396"/>
</dbReference>
<dbReference type="IntAct" id="Q9GZX6">
    <property type="interactions" value="3"/>
</dbReference>
<dbReference type="MINT" id="Q9GZX6"/>
<dbReference type="STRING" id="9606.ENSP00000442424"/>
<dbReference type="BindingDB" id="Q9GZX6"/>
<dbReference type="ChEMBL" id="CHEMBL3712915"/>
<dbReference type="GlyCosmos" id="Q9GZX6">
    <property type="glycosylation" value="3 sites, No reported glycans"/>
</dbReference>
<dbReference type="GlyGen" id="Q9GZX6">
    <property type="glycosylation" value="3 sites"/>
</dbReference>
<dbReference type="iPTMnet" id="Q9GZX6"/>
<dbReference type="PhosphoSitePlus" id="Q9GZX6"/>
<dbReference type="BioMuta" id="IL22"/>
<dbReference type="DMDM" id="17366814"/>
<dbReference type="jPOST" id="Q9GZX6"/>
<dbReference type="MassIVE" id="Q9GZX6"/>
<dbReference type="PaxDb" id="9606-ENSP00000442424"/>
<dbReference type="PeptideAtlas" id="Q9GZX6"/>
<dbReference type="ProteomicsDB" id="80167"/>
<dbReference type="ABCD" id="Q9GZX6">
    <property type="antibodies" value="35 sequenced antibodies"/>
</dbReference>
<dbReference type="Antibodypedia" id="16687">
    <property type="antibodies" value="1004 antibodies from 46 providers"/>
</dbReference>
<dbReference type="DNASU" id="50616"/>
<dbReference type="Ensembl" id="ENST00000328087.6">
    <property type="protein sequence ID" value="ENSP00000329384.4"/>
    <property type="gene ID" value="ENSG00000127318.11"/>
</dbReference>
<dbReference type="Ensembl" id="ENST00000538666.6">
    <property type="protein sequence ID" value="ENSP00000442424.1"/>
    <property type="gene ID" value="ENSG00000127318.11"/>
</dbReference>
<dbReference type="GeneID" id="50616"/>
<dbReference type="KEGG" id="hsa:50616"/>
<dbReference type="MANE-Select" id="ENST00000538666.6">
    <property type="protein sequence ID" value="ENSP00000442424.1"/>
    <property type="RefSeq nucleotide sequence ID" value="NM_020525.5"/>
    <property type="RefSeq protein sequence ID" value="NP_065386.1"/>
</dbReference>
<dbReference type="UCSC" id="uc001sty.2">
    <property type="organism name" value="human"/>
</dbReference>
<dbReference type="AGR" id="HGNC:14900"/>
<dbReference type="CTD" id="50616"/>
<dbReference type="DisGeNET" id="50616"/>
<dbReference type="GeneCards" id="IL22"/>
<dbReference type="HGNC" id="HGNC:14900">
    <property type="gene designation" value="IL22"/>
</dbReference>
<dbReference type="HPA" id="ENSG00000127318">
    <property type="expression patterns" value="Tissue enhanced (urinary)"/>
</dbReference>
<dbReference type="MIM" id="605330">
    <property type="type" value="gene"/>
</dbReference>
<dbReference type="neXtProt" id="NX_Q9GZX6"/>
<dbReference type="OpenTargets" id="ENSG00000127318"/>
<dbReference type="PharmGKB" id="PA29822"/>
<dbReference type="VEuPathDB" id="HostDB:ENSG00000127318"/>
<dbReference type="eggNOG" id="ENOG502S5PC">
    <property type="taxonomic scope" value="Eukaryota"/>
</dbReference>
<dbReference type="GeneTree" id="ENSGT00510000048550"/>
<dbReference type="HOGENOM" id="CLU_127397_0_0_1"/>
<dbReference type="InParanoid" id="Q9GZX6"/>
<dbReference type="OMA" id="INFQQPY"/>
<dbReference type="OrthoDB" id="9451249at2759"/>
<dbReference type="PAN-GO" id="Q9GZX6">
    <property type="GO annotations" value="0 GO annotations based on evolutionary models"/>
</dbReference>
<dbReference type="PhylomeDB" id="Q9GZX6"/>
<dbReference type="TreeFam" id="TF333253"/>
<dbReference type="PathwayCommons" id="Q9GZX6"/>
<dbReference type="Reactome" id="R-HSA-8854691">
    <property type="pathway name" value="Interleukin-20 family signaling"/>
</dbReference>
<dbReference type="Reactome" id="R-HSA-9725370">
    <property type="pathway name" value="Signaling by ALK fusions and activated point mutants"/>
</dbReference>
<dbReference type="SignaLink" id="Q9GZX6"/>
<dbReference type="SIGNOR" id="Q9GZX6"/>
<dbReference type="BioGRID-ORCS" id="50616">
    <property type="hits" value="10 hits in 1136 CRISPR screens"/>
</dbReference>
<dbReference type="ChiTaRS" id="IL22">
    <property type="organism name" value="human"/>
</dbReference>
<dbReference type="EvolutionaryTrace" id="Q9GZX6"/>
<dbReference type="GeneWiki" id="Interleukin_22"/>
<dbReference type="GenomeRNAi" id="50616"/>
<dbReference type="Pharos" id="Q9GZX6">
    <property type="development level" value="Tbio"/>
</dbReference>
<dbReference type="PRO" id="PR:Q9GZX6"/>
<dbReference type="Proteomes" id="UP000005640">
    <property type="component" value="Chromosome 12"/>
</dbReference>
<dbReference type="RNAct" id="Q9GZX6">
    <property type="molecule type" value="protein"/>
</dbReference>
<dbReference type="Bgee" id="ENSG00000127318">
    <property type="expression patterns" value="Expressed in vermiform appendix and 57 other cell types or tissues"/>
</dbReference>
<dbReference type="GO" id="GO:0005576">
    <property type="term" value="C:extracellular region"/>
    <property type="evidence" value="ECO:0000304"/>
    <property type="project" value="Reactome"/>
</dbReference>
<dbReference type="GO" id="GO:0005615">
    <property type="term" value="C:extracellular space"/>
    <property type="evidence" value="ECO:0000250"/>
    <property type="project" value="UniProt"/>
</dbReference>
<dbReference type="GO" id="GO:0005125">
    <property type="term" value="F:cytokine activity"/>
    <property type="evidence" value="ECO:0000250"/>
    <property type="project" value="UniProt"/>
</dbReference>
<dbReference type="GO" id="GO:0045518">
    <property type="term" value="F:interleukin-22 receptor binding"/>
    <property type="evidence" value="ECO:0000303"/>
    <property type="project" value="UniProtKB"/>
</dbReference>
<dbReference type="GO" id="GO:0006953">
    <property type="term" value="P:acute-phase response"/>
    <property type="evidence" value="ECO:0000303"/>
    <property type="project" value="UniProtKB"/>
</dbReference>
<dbReference type="GO" id="GO:0006954">
    <property type="term" value="P:inflammatory response"/>
    <property type="evidence" value="ECO:0000303"/>
    <property type="project" value="UniProtKB"/>
</dbReference>
<dbReference type="GO" id="GO:0050728">
    <property type="term" value="P:negative regulation of inflammatory response"/>
    <property type="evidence" value="ECO:0000250"/>
    <property type="project" value="UniProt"/>
</dbReference>
<dbReference type="GO" id="GO:0051384">
    <property type="term" value="P:response to glucocorticoid"/>
    <property type="evidence" value="ECO:0007669"/>
    <property type="project" value="Ensembl"/>
</dbReference>
<dbReference type="FunFam" id="1.20.1250.10:FF:000032">
    <property type="entry name" value="Interleukin-22"/>
    <property type="match status" value="1"/>
</dbReference>
<dbReference type="Gene3D" id="1.20.1250.10">
    <property type="match status" value="1"/>
</dbReference>
<dbReference type="InterPro" id="IPR009079">
    <property type="entry name" value="4_helix_cytokine-like_core"/>
</dbReference>
<dbReference type="InterPro" id="IPR020423">
    <property type="entry name" value="IL-10_CS"/>
</dbReference>
<dbReference type="InterPro" id="IPR020453">
    <property type="entry name" value="IL-22"/>
</dbReference>
<dbReference type="PANTHER" id="PTHR48488">
    <property type="entry name" value="INTERLEUKIN-22"/>
    <property type="match status" value="1"/>
</dbReference>
<dbReference type="PANTHER" id="PTHR48488:SF1">
    <property type="entry name" value="INTERLEUKIN-22"/>
    <property type="match status" value="1"/>
</dbReference>
<dbReference type="Pfam" id="PF14565">
    <property type="entry name" value="IL22"/>
    <property type="match status" value="1"/>
</dbReference>
<dbReference type="PIRSF" id="PIRSF037726">
    <property type="entry name" value="Interleukin-22"/>
    <property type="match status" value="1"/>
</dbReference>
<dbReference type="PRINTS" id="PR01936">
    <property type="entry name" value="INTRLEUKIN22"/>
</dbReference>
<dbReference type="SUPFAM" id="SSF47266">
    <property type="entry name" value="4-helical cytokines"/>
    <property type="match status" value="1"/>
</dbReference>
<dbReference type="PROSITE" id="PS00520">
    <property type="entry name" value="INTERLEUKIN_10"/>
    <property type="match status" value="1"/>
</dbReference>
<evidence type="ECO:0000250" key="1">
    <source>
        <dbReference type="UniProtKB" id="Q9JJY9"/>
    </source>
</evidence>
<evidence type="ECO:0000255" key="2"/>
<evidence type="ECO:0000269" key="3">
    <source>
    </source>
</evidence>
<evidence type="ECO:0000269" key="4">
    <source>
    </source>
</evidence>
<evidence type="ECO:0000269" key="5">
    <source>
    </source>
</evidence>
<evidence type="ECO:0000269" key="6">
    <source>
    </source>
</evidence>
<evidence type="ECO:0000269" key="7">
    <source>
    </source>
</evidence>
<evidence type="ECO:0000269" key="8">
    <source>
    </source>
</evidence>
<evidence type="ECO:0000269" key="9">
    <source>
    </source>
</evidence>
<evidence type="ECO:0000269" key="10">
    <source ref="5"/>
</evidence>
<evidence type="ECO:0000305" key="11"/>
<evidence type="ECO:0007829" key="12">
    <source>
        <dbReference type="PDB" id="1M4R"/>
    </source>
</evidence>
<evidence type="ECO:0007829" key="13">
    <source>
        <dbReference type="PDB" id="3DLQ"/>
    </source>
</evidence>
<gene>
    <name type="primary">IL22</name>
    <name type="synonym">ILTIF</name>
    <name type="synonym">ZCYTO18</name>
    <name type="ORF">UNQ3099/PRO10096</name>
</gene>
<organism>
    <name type="scientific">Homo sapiens</name>
    <name type="common">Human</name>
    <dbReference type="NCBI Taxonomy" id="9606"/>
    <lineage>
        <taxon>Eukaryota</taxon>
        <taxon>Metazoa</taxon>
        <taxon>Chordata</taxon>
        <taxon>Craniata</taxon>
        <taxon>Vertebrata</taxon>
        <taxon>Euteleostomi</taxon>
        <taxon>Mammalia</taxon>
        <taxon>Eutheria</taxon>
        <taxon>Euarchontoglires</taxon>
        <taxon>Primates</taxon>
        <taxon>Haplorrhini</taxon>
        <taxon>Catarrhini</taxon>
        <taxon>Hominidae</taxon>
        <taxon>Homo</taxon>
    </lineage>
</organism>
<protein>
    <recommendedName>
        <fullName>Interleukin-22</fullName>
        <shortName>IL-22</shortName>
    </recommendedName>
    <alternativeName>
        <fullName>Cytokine Zcyto18</fullName>
    </alternativeName>
    <alternativeName>
        <fullName>IL-10-related T-cell-derived-inducible factor</fullName>
        <shortName>IL-TIF</shortName>
    </alternativeName>
</protein>
<sequence length="179" mass="20011">MAALQKSVSSFLMGTLATSCLLLLALLVQGGAAAPISSHCRLDKSNFQQPYITNRTFMLAKEASLADNNTDVRLIGEKLFHGVSMSERCYLMKQVLNFTLEEVLFPQSDRFQPYMQEVVPFLARLSNRLSTCHIEGDDLHIQRNVQKLKDTVKKLGESGEIKAIGELDLLFMSLRNACI</sequence>
<proteinExistence type="evidence at protein level"/>
<feature type="signal peptide" evidence="4">
    <location>
        <begin position="1"/>
        <end position="33"/>
    </location>
</feature>
<feature type="chain" id="PRO_0000015383" description="Interleukin-22">
    <location>
        <begin position="34"/>
        <end position="179"/>
    </location>
</feature>
<feature type="glycosylation site" description="N-linked (GlcNAc...) asparagine" evidence="5">
    <location>
        <position position="54"/>
    </location>
</feature>
<feature type="glycosylation site" description="N-linked (GlcNAc...) asparagine" evidence="2">
    <location>
        <position position="68"/>
    </location>
</feature>
<feature type="glycosylation site" description="N-linked (GlcNAc...) asparagine" evidence="5">
    <location>
        <position position="97"/>
    </location>
</feature>
<feature type="disulfide bond" evidence="7">
    <location>
        <begin position="40"/>
        <end position="132"/>
    </location>
</feature>
<feature type="disulfide bond" evidence="7">
    <location>
        <begin position="89"/>
        <end position="178"/>
    </location>
</feature>
<feature type="sequence variant" id="VAR_013078" description="In dbSNP:rs2227507." evidence="10">
    <original>S</original>
    <variation>G</variation>
    <location>
        <position position="158"/>
    </location>
</feature>
<feature type="helix" evidence="13">
    <location>
        <begin position="44"/>
        <end position="47"/>
    </location>
</feature>
<feature type="helix" evidence="13">
    <location>
        <begin position="50"/>
        <end position="65"/>
    </location>
</feature>
<feature type="strand" evidence="12">
    <location>
        <begin position="74"/>
        <end position="76"/>
    </location>
</feature>
<feature type="helix" evidence="13">
    <location>
        <begin position="77"/>
        <end position="80"/>
    </location>
</feature>
<feature type="helix" evidence="13">
    <location>
        <begin position="85"/>
        <end position="87"/>
    </location>
</feature>
<feature type="helix" evidence="13">
    <location>
        <begin position="88"/>
        <end position="102"/>
    </location>
</feature>
<feature type="turn" evidence="13">
    <location>
        <begin position="103"/>
        <end position="109"/>
    </location>
</feature>
<feature type="helix" evidence="13">
    <location>
        <begin position="114"/>
        <end position="129"/>
    </location>
</feature>
<feature type="helix" evidence="13">
    <location>
        <begin position="141"/>
        <end position="155"/>
    </location>
</feature>
<feature type="helix" evidence="13">
    <location>
        <begin position="157"/>
        <end position="165"/>
    </location>
</feature>
<feature type="helix" evidence="13">
    <location>
        <begin position="167"/>
        <end position="178"/>
    </location>
</feature>
<reference key="1">
    <citation type="journal article" date="2000" name="Proc. Natl. Acad. Sci. U.S.A.">
        <title>Human interleukin-10-related T cell-derived inducible factor: molecular cloning and functional characterization as an hepatocyte-stimulating factor.</title>
        <authorList>
            <person name="Dumoutier L."/>
            <person name="Van Roost E."/>
            <person name="Colau D."/>
            <person name="Renauld J.-C."/>
        </authorList>
    </citation>
    <scope>NUCLEOTIDE SEQUENCE [MRNA]</scope>
</reference>
<reference key="2">
    <citation type="journal article" date="2000" name="Genes Immun.">
        <title>IL-TIF/IL-22: genomic organization and mapping of the human and mouse genes.</title>
        <authorList>
            <person name="Dumoutier L."/>
            <person name="Van Roost E."/>
            <person name="Colau D."/>
            <person name="Ameye G."/>
            <person name="Michaux L."/>
            <person name="Renauld J.-C."/>
        </authorList>
    </citation>
    <scope>NUCLEOTIDE SEQUENCE [GENOMIC DNA]</scope>
</reference>
<reference key="3">
    <citation type="journal article" date="2000" name="J. Biol. Chem.">
        <title>Interleukin (IL)-22, a novel human cytokine that signals through the interferon receptor-related proteins CRF2-4 and IL-22R.</title>
        <authorList>
            <person name="Xie M.-H."/>
            <person name="Aggarwal S."/>
            <person name="Ho W.-H."/>
            <person name="Foster J."/>
            <person name="Zhang Z."/>
            <person name="Stinson J."/>
            <person name="Wood W.I."/>
            <person name="Goddard A.D."/>
            <person name="Gurney A.L."/>
        </authorList>
    </citation>
    <scope>NUCLEOTIDE SEQUENCE [MRNA]</scope>
    <scope>FUNCTION</scope>
</reference>
<reference key="4">
    <citation type="journal article" date="2003" name="Genome Res.">
        <title>The secreted protein discovery initiative (SPDI), a large-scale effort to identify novel human secreted and transmembrane proteins: a bioinformatics assessment.</title>
        <authorList>
            <person name="Clark H.F."/>
            <person name="Gurney A.L."/>
            <person name="Abaya E."/>
            <person name="Baker K."/>
            <person name="Baldwin D.T."/>
            <person name="Brush J."/>
            <person name="Chen J."/>
            <person name="Chow B."/>
            <person name="Chui C."/>
            <person name="Crowley C."/>
            <person name="Currell B."/>
            <person name="Deuel B."/>
            <person name="Dowd P."/>
            <person name="Eaton D."/>
            <person name="Foster J.S."/>
            <person name="Grimaldi C."/>
            <person name="Gu Q."/>
            <person name="Hass P.E."/>
            <person name="Heldens S."/>
            <person name="Huang A."/>
            <person name="Kim H.S."/>
            <person name="Klimowski L."/>
            <person name="Jin Y."/>
            <person name="Johnson S."/>
            <person name="Lee J."/>
            <person name="Lewis L."/>
            <person name="Liao D."/>
            <person name="Mark M.R."/>
            <person name="Robbie E."/>
            <person name="Sanchez C."/>
            <person name="Schoenfeld J."/>
            <person name="Seshagiri S."/>
            <person name="Simmons L."/>
            <person name="Singh J."/>
            <person name="Smith V."/>
            <person name="Stinson J."/>
            <person name="Vagts A."/>
            <person name="Vandlen R.L."/>
            <person name="Watanabe C."/>
            <person name="Wieand D."/>
            <person name="Woods K."/>
            <person name="Xie M.-H."/>
            <person name="Yansura D.G."/>
            <person name="Yi S."/>
            <person name="Yu G."/>
            <person name="Yuan J."/>
            <person name="Zhang M."/>
            <person name="Zhang Z."/>
            <person name="Goddard A.D."/>
            <person name="Wood W.I."/>
            <person name="Godowski P.J."/>
            <person name="Gray A.M."/>
        </authorList>
    </citation>
    <scope>NUCLEOTIDE SEQUENCE [LARGE SCALE MRNA]</scope>
</reference>
<reference key="5">
    <citation type="submission" date="2001-06" db="EMBL/GenBank/DDBJ databases">
        <authorList>
            <consortium name="SeattleSNPs variation discovery resource"/>
        </authorList>
    </citation>
    <scope>NUCLEOTIDE SEQUENCE [GENOMIC DNA]</scope>
    <scope>VARIANT GLY-158</scope>
</reference>
<reference key="6">
    <citation type="journal article" date="2004" name="Genome Res.">
        <title>The status, quality, and expansion of the NIH full-length cDNA project: the Mammalian Gene Collection (MGC).</title>
        <authorList>
            <consortium name="The MGC Project Team"/>
        </authorList>
    </citation>
    <scope>NUCLEOTIDE SEQUENCE [LARGE SCALE MRNA]</scope>
    <source>
        <tissue>Blood</tissue>
    </source>
</reference>
<reference key="7">
    <citation type="journal article" date="2004" name="Protein Sci.">
        <title>Signal peptide prediction based on analysis of experimentally verified cleavage sites.</title>
        <authorList>
            <person name="Zhang Z."/>
            <person name="Henzel W.J."/>
        </authorList>
    </citation>
    <scope>PROTEIN SEQUENCE OF 34-48</scope>
</reference>
<reference key="8">
    <citation type="journal article" date="2007" name="Am. J. Physiol.">
        <title>IL-22-mediated liver cell regeneration is abrogated by SOCS-1/3 overexpression in vitro.</title>
        <authorList>
            <person name="Brand S."/>
            <person name="Dambacher J."/>
            <person name="Beigel F."/>
            <person name="Zitzmann K."/>
            <person name="Heeg M.H.J."/>
            <person name="Weiss T.S."/>
            <person name="Pruefer T."/>
            <person name="Olszak T."/>
            <person name="Steib C.J."/>
            <person name="Storr M."/>
            <person name="Goeke B."/>
            <person name="Diepolder H."/>
            <person name="Bilzer M."/>
            <person name="Thasler W.E."/>
            <person name="Auernhammer C.J."/>
        </authorList>
    </citation>
    <scope>FUNCTION</scope>
</reference>
<reference key="9">
    <citation type="journal article" date="2015" name="PLoS ONE">
        <title>IL22/IL-22R pathway induces cell survival in human glioblastoma cells.</title>
        <authorList>
            <person name="Akil H."/>
            <person name="Abbaci A."/>
            <person name="Lalloue F."/>
            <person name="Bessette B."/>
            <person name="Costes L.M."/>
            <person name="Domballe L."/>
            <person name="Charreau S."/>
            <person name="Guilloteau K."/>
            <person name="Karayan-Tapon L."/>
            <person name="Bernard F.X."/>
            <person name="Morel F."/>
            <person name="Jauberteau M.O."/>
            <person name="Lecron J.C."/>
        </authorList>
    </citation>
    <scope>FUNCTION</scope>
</reference>
<reference key="10">
    <citation type="journal article" date="2019" name="Int. J. Mol. Sci.">
        <title>Interleukin (IL)-22 from IL-20 Subfamily of Cytokines Induces Colonic Epithelial Cell Proliferation Predominantly through ERK1/2 Pathway.</title>
        <authorList>
            <person name="Moniruzzaman M."/>
            <person name="Wang R."/>
            <person name="Jeet V."/>
            <person name="McGuckin M.A."/>
            <person name="Hasnain S.Z."/>
        </authorList>
    </citation>
    <scope>FUNCTION</scope>
</reference>
<reference key="11">
    <citation type="journal article" date="2002" name="Acta Crystallogr. D">
        <title>Crystallization and synchrotron X-ray diffraction studies of human interleukin-22.</title>
        <authorList>
            <person name="Nagem R.A."/>
            <person name="Lucchesi K.W."/>
            <person name="Colau D."/>
            <person name="Dumoutier L."/>
            <person name="Renauld J.-C."/>
            <person name="Polikarpov I."/>
        </authorList>
    </citation>
    <scope>X-RAY CRYSTALLOGRAPHY (2.0 ANGSTROMS) OF 29-179</scope>
</reference>
<reference key="12">
    <citation type="journal article" date="2005" name="Acta Crystallogr. D">
        <title>Structure of insect-cell-derived IL-22.</title>
        <authorList>
            <person name="Xu T."/>
            <person name="Logsdon N.J."/>
            <person name="Walter M.R."/>
        </authorList>
    </citation>
    <scope>X-RAY CRYSTALLOGRAPHY (2.6 ANGSTROMS) OF 38-179</scope>
    <scope>GLYCOSYLATION AT ASN-54 AND ASN-97</scope>
</reference>
<reference key="13">
    <citation type="journal article" date="2008" name="Structure">
        <title>Structure of IL-22 bound to its high-affinity IL-22R1 chain.</title>
        <authorList>
            <person name="Jones B.C."/>
            <person name="Logsdon N.J."/>
            <person name="Walter M.R."/>
        </authorList>
    </citation>
    <scope>X-RAY CRYSTALLOGRAPHY (2.5 ANGSTROMS) OF 39-179 IN COMPLEX WITH IL22RA1</scope>
    <scope>DISULFIDE BONDS</scope>
    <scope>FUNCTION</scope>
</reference>
<keyword id="KW-0002">3D-structure</keyword>
<keyword id="KW-0202">Cytokine</keyword>
<keyword id="KW-0903">Direct protein sequencing</keyword>
<keyword id="KW-1015">Disulfide bond</keyword>
<keyword id="KW-0325">Glycoprotein</keyword>
<keyword id="KW-1267">Proteomics identification</keyword>
<keyword id="KW-1185">Reference proteome</keyword>
<keyword id="KW-0964">Secreted</keyword>
<keyword id="KW-0732">Signal</keyword>
<accession>Q9GZX6</accession>
<name>IL22_HUMAN</name>